<proteinExistence type="evidence at transcript level"/>
<protein>
    <recommendedName>
        <fullName>Uncharacterized fimbrial-like protein YehD</fullName>
    </recommendedName>
</protein>
<dbReference type="EMBL" id="U00007">
    <property type="protein sequence ID" value="AAA60475.1"/>
    <property type="molecule type" value="Genomic_DNA"/>
</dbReference>
<dbReference type="EMBL" id="U00096">
    <property type="protein sequence ID" value="AAC75172.1"/>
    <property type="molecule type" value="Genomic_DNA"/>
</dbReference>
<dbReference type="EMBL" id="AP009048">
    <property type="protein sequence ID" value="BAE76589.1"/>
    <property type="molecule type" value="Genomic_DNA"/>
</dbReference>
<dbReference type="PIR" id="F64978">
    <property type="entry name" value="F64978"/>
</dbReference>
<dbReference type="RefSeq" id="NP_416614.1">
    <property type="nucleotide sequence ID" value="NC_000913.3"/>
</dbReference>
<dbReference type="RefSeq" id="WP_000830456.1">
    <property type="nucleotide sequence ID" value="NZ_SSZK01000011.1"/>
</dbReference>
<dbReference type="SMR" id="P33343"/>
<dbReference type="BioGRID" id="4260437">
    <property type="interactions" value="108"/>
</dbReference>
<dbReference type="BioGRID" id="850965">
    <property type="interactions" value="1"/>
</dbReference>
<dbReference type="FunCoup" id="P33343">
    <property type="interactions" value="21"/>
</dbReference>
<dbReference type="IntAct" id="P33343">
    <property type="interactions" value="3"/>
</dbReference>
<dbReference type="STRING" id="511145.b2111"/>
<dbReference type="jPOST" id="P33343"/>
<dbReference type="PaxDb" id="511145-b2111"/>
<dbReference type="DNASU" id="946619"/>
<dbReference type="EnsemblBacteria" id="AAC75172">
    <property type="protein sequence ID" value="AAC75172"/>
    <property type="gene ID" value="b2111"/>
</dbReference>
<dbReference type="GeneID" id="946619"/>
<dbReference type="KEGG" id="ecj:JW2098"/>
<dbReference type="KEGG" id="eco:b2111"/>
<dbReference type="KEGG" id="ecoc:C3026_11840"/>
<dbReference type="PATRIC" id="fig|1411691.4.peg.136"/>
<dbReference type="EchoBASE" id="EB1933"/>
<dbReference type="eggNOG" id="COG3539">
    <property type="taxonomic scope" value="Bacteria"/>
</dbReference>
<dbReference type="HOGENOM" id="CLU_125860_0_0_6"/>
<dbReference type="InParanoid" id="P33343"/>
<dbReference type="OMA" id="KCTNTAN"/>
<dbReference type="OrthoDB" id="6572226at2"/>
<dbReference type="PhylomeDB" id="P33343"/>
<dbReference type="BioCyc" id="EcoCyc:EG11990-MONOMER"/>
<dbReference type="PRO" id="PR:P33343"/>
<dbReference type="Proteomes" id="UP000000625">
    <property type="component" value="Chromosome"/>
</dbReference>
<dbReference type="GO" id="GO:0009289">
    <property type="term" value="C:pilus"/>
    <property type="evidence" value="ECO:0000314"/>
    <property type="project" value="EcoCyc"/>
</dbReference>
<dbReference type="GO" id="GO:0007155">
    <property type="term" value="P:cell adhesion"/>
    <property type="evidence" value="ECO:0000315"/>
    <property type="project" value="EcoCyc"/>
</dbReference>
<dbReference type="GO" id="GO:0043709">
    <property type="term" value="P:cell adhesion involved in single-species biofilm formation"/>
    <property type="evidence" value="ECO:0000318"/>
    <property type="project" value="GO_Central"/>
</dbReference>
<dbReference type="FunFam" id="2.60.40.1090:FF:000014">
    <property type="entry name" value="Fimbrial family protein"/>
    <property type="match status" value="1"/>
</dbReference>
<dbReference type="Gene3D" id="2.60.40.1090">
    <property type="entry name" value="Fimbrial-type adhesion domain"/>
    <property type="match status" value="1"/>
</dbReference>
<dbReference type="InterPro" id="IPR000259">
    <property type="entry name" value="Adhesion_dom_fimbrial"/>
</dbReference>
<dbReference type="InterPro" id="IPR036937">
    <property type="entry name" value="Adhesion_dom_fimbrial_sf"/>
</dbReference>
<dbReference type="InterPro" id="IPR008966">
    <property type="entry name" value="Adhesion_dom_sf"/>
</dbReference>
<dbReference type="InterPro" id="IPR050263">
    <property type="entry name" value="Bact_Fimbrial_Adh_Pro"/>
</dbReference>
<dbReference type="PANTHER" id="PTHR33420">
    <property type="entry name" value="FIMBRIAL SUBUNIT ELFA-RELATED"/>
    <property type="match status" value="1"/>
</dbReference>
<dbReference type="PANTHER" id="PTHR33420:SF32">
    <property type="entry name" value="FIMBRIAL-LIKE PROTEIN"/>
    <property type="match status" value="1"/>
</dbReference>
<dbReference type="Pfam" id="PF00419">
    <property type="entry name" value="Fimbrial"/>
    <property type="match status" value="1"/>
</dbReference>
<dbReference type="SUPFAM" id="SSF49401">
    <property type="entry name" value="Bacterial adhesins"/>
    <property type="match status" value="1"/>
</dbReference>
<gene>
    <name type="primary">yehD</name>
    <name type="ordered locus">b2111</name>
    <name type="ordered locus">JW2098</name>
</gene>
<accession>P33343</accession>
<accession>Q2MAW7</accession>
<reference key="1">
    <citation type="submission" date="1993-10" db="EMBL/GenBank/DDBJ databases">
        <title>Automated multiplex sequencing of the E.coli genome.</title>
        <authorList>
            <person name="Richterich P."/>
            <person name="Lakey N."/>
            <person name="Gryan G."/>
            <person name="Jaehn L."/>
            <person name="Mintz L."/>
            <person name="Robison K."/>
            <person name="Church G.M."/>
        </authorList>
    </citation>
    <scope>NUCLEOTIDE SEQUENCE [LARGE SCALE GENOMIC DNA]</scope>
    <source>
        <strain>K12 / BHB2600</strain>
    </source>
</reference>
<reference key="2">
    <citation type="journal article" date="1997" name="Science">
        <title>The complete genome sequence of Escherichia coli K-12.</title>
        <authorList>
            <person name="Blattner F.R."/>
            <person name="Plunkett G. III"/>
            <person name="Bloch C.A."/>
            <person name="Perna N.T."/>
            <person name="Burland V."/>
            <person name="Riley M."/>
            <person name="Collado-Vides J."/>
            <person name="Glasner J.D."/>
            <person name="Rode C.K."/>
            <person name="Mayhew G.F."/>
            <person name="Gregor J."/>
            <person name="Davis N.W."/>
            <person name="Kirkpatrick H.A."/>
            <person name="Goeden M.A."/>
            <person name="Rose D.J."/>
            <person name="Mau B."/>
            <person name="Shao Y."/>
        </authorList>
    </citation>
    <scope>NUCLEOTIDE SEQUENCE [LARGE SCALE GENOMIC DNA]</scope>
    <source>
        <strain>K12 / MG1655 / ATCC 47076</strain>
    </source>
</reference>
<reference key="3">
    <citation type="journal article" date="2006" name="Mol. Syst. Biol.">
        <title>Highly accurate genome sequences of Escherichia coli K-12 strains MG1655 and W3110.</title>
        <authorList>
            <person name="Hayashi K."/>
            <person name="Morooka N."/>
            <person name="Yamamoto Y."/>
            <person name="Fujita K."/>
            <person name="Isono K."/>
            <person name="Choi S."/>
            <person name="Ohtsubo E."/>
            <person name="Baba T."/>
            <person name="Wanner B.L."/>
            <person name="Mori H."/>
            <person name="Horiuchi T."/>
        </authorList>
    </citation>
    <scope>NUCLEOTIDE SEQUENCE [LARGE SCALE GENOMIC DNA]</scope>
    <source>
        <strain>K12 / W3110 / ATCC 27325 / DSM 5911</strain>
    </source>
</reference>
<reference key="4">
    <citation type="journal article" date="2010" name="Environ. Microbiol.">
        <title>Escherichia coli K-12 possesses multiple cryptic but functional chaperone-usher fimbriae with distinct surface specificities.</title>
        <authorList>
            <person name="Korea C.G."/>
            <person name="Badouraly R."/>
            <person name="Prevost M.C."/>
            <person name="Ghigo J.M."/>
            <person name="Beloin C."/>
        </authorList>
    </citation>
    <scope>FUNCTION</scope>
    <scope>INDUCTION</scope>
    <scope>DISRUPTION PHENOTYPE</scope>
    <source>
        <strain>K12 / MG1655 / ATCC 47076</strain>
    </source>
</reference>
<sequence length="180" mass="19061">MKRSIIAAAVFSSFFMSAGVFAADVDTGTLTIKGNIAESPCKFEAGGDSVSINMPTVPTSVFEGKAKYSTYDDAVGVTSSMLKISCPKEVAGVKLSLITNDKITGNDKAIASSNDTVGYYLYLGDNSDVLDVSAPFNIESYKTAEGQYAIPFKAKYLKLTDNSVQSGDVLSSLVMRVAQD</sequence>
<feature type="signal peptide" evidence="1">
    <location>
        <begin position="1"/>
        <end position="22"/>
    </location>
</feature>
<feature type="chain" id="PRO_0000013868" description="Uncharacterized fimbrial-like protein YehD">
    <location>
        <begin position="23"/>
        <end position="180"/>
    </location>
</feature>
<keyword id="KW-1185">Reference proteome</keyword>
<keyword id="KW-0732">Signal</keyword>
<comment type="function">
    <text evidence="2">Part of the yehABCD fimbrial operon. Could contribute to adhesion to various surfaces in specific environmental niches.</text>
</comment>
<comment type="induction">
    <text evidence="2">Expression is negatively regulated by H-NS and subjected to cAMP receptor protein (CRP)-mediated catabolite repression.</text>
</comment>
<comment type="disruption phenotype">
    <text evidence="2">Deletion of the operon under classical laboratory conditions does not result in any major effect on E.coli capacity to form biofilms compared with the wild-type strain.</text>
</comment>
<comment type="miscellaneous">
    <text evidence="4">The operon is cryptic under classical laboratory conditions, but is functional when constitutively expressed.</text>
</comment>
<comment type="similarity">
    <text evidence="3">Belongs to the fimbrial protein family.</text>
</comment>
<organism>
    <name type="scientific">Escherichia coli (strain K12)</name>
    <dbReference type="NCBI Taxonomy" id="83333"/>
    <lineage>
        <taxon>Bacteria</taxon>
        <taxon>Pseudomonadati</taxon>
        <taxon>Pseudomonadota</taxon>
        <taxon>Gammaproteobacteria</taxon>
        <taxon>Enterobacterales</taxon>
        <taxon>Enterobacteriaceae</taxon>
        <taxon>Escherichia</taxon>
    </lineage>
</organism>
<evidence type="ECO:0000255" key="1"/>
<evidence type="ECO:0000269" key="2">
    <source>
    </source>
</evidence>
<evidence type="ECO:0000305" key="3"/>
<evidence type="ECO:0000305" key="4">
    <source>
    </source>
</evidence>
<name>YEHD_ECOLI</name>